<protein>
    <recommendedName>
        <fullName evidence="1">Phosphopantetheine adenylyltransferase</fullName>
        <ecNumber evidence="1">2.7.7.3</ecNumber>
    </recommendedName>
    <alternativeName>
        <fullName evidence="1">Dephospho-CoA pyrophosphorylase</fullName>
    </alternativeName>
    <alternativeName>
        <fullName evidence="1">Pantetheine-phosphate adenylyltransferase</fullName>
        <shortName evidence="1">PPAT</shortName>
    </alternativeName>
</protein>
<gene>
    <name evidence="1" type="primary">coaD</name>
    <name type="synonym">kdtB</name>
    <name type="ordered locus">ML1663</name>
    <name type="ORF">MLCB1243.10</name>
</gene>
<dbReference type="EC" id="2.7.7.3" evidence="1"/>
<dbReference type="EMBL" id="AL023635">
    <property type="protein sequence ID" value="CAA19191.1"/>
    <property type="molecule type" value="Genomic_DNA"/>
</dbReference>
<dbReference type="EMBL" id="AL583923">
    <property type="protein sequence ID" value="CAC30616.1"/>
    <property type="status" value="ALT_INIT"/>
    <property type="molecule type" value="Genomic_DNA"/>
</dbReference>
<dbReference type="PIR" id="A87117">
    <property type="entry name" value="A87117"/>
</dbReference>
<dbReference type="PIR" id="T44703">
    <property type="entry name" value="T44703"/>
</dbReference>
<dbReference type="RefSeq" id="WP_041322890.1">
    <property type="nucleotide sequence ID" value="NC_002677.1"/>
</dbReference>
<dbReference type="SMR" id="O69466"/>
<dbReference type="STRING" id="272631.gene:17575506"/>
<dbReference type="KEGG" id="mle:ML1663"/>
<dbReference type="Leproma" id="ML1663"/>
<dbReference type="eggNOG" id="COG0669">
    <property type="taxonomic scope" value="Bacteria"/>
</dbReference>
<dbReference type="HOGENOM" id="CLU_100149_1_0_11"/>
<dbReference type="UniPathway" id="UPA00241">
    <property type="reaction ID" value="UER00355"/>
</dbReference>
<dbReference type="Proteomes" id="UP000000806">
    <property type="component" value="Chromosome"/>
</dbReference>
<dbReference type="GO" id="GO:0005737">
    <property type="term" value="C:cytoplasm"/>
    <property type="evidence" value="ECO:0007669"/>
    <property type="project" value="UniProtKB-SubCell"/>
</dbReference>
<dbReference type="GO" id="GO:0005524">
    <property type="term" value="F:ATP binding"/>
    <property type="evidence" value="ECO:0007669"/>
    <property type="project" value="UniProtKB-KW"/>
</dbReference>
<dbReference type="GO" id="GO:0004595">
    <property type="term" value="F:pantetheine-phosphate adenylyltransferase activity"/>
    <property type="evidence" value="ECO:0007669"/>
    <property type="project" value="UniProtKB-UniRule"/>
</dbReference>
<dbReference type="GO" id="GO:0015937">
    <property type="term" value="P:coenzyme A biosynthetic process"/>
    <property type="evidence" value="ECO:0007669"/>
    <property type="project" value="UniProtKB-UniRule"/>
</dbReference>
<dbReference type="CDD" id="cd02163">
    <property type="entry name" value="PPAT"/>
    <property type="match status" value="1"/>
</dbReference>
<dbReference type="FunFam" id="3.40.50.620:FF:000012">
    <property type="entry name" value="Phosphopantetheine adenylyltransferase"/>
    <property type="match status" value="1"/>
</dbReference>
<dbReference type="Gene3D" id="3.40.50.620">
    <property type="entry name" value="HUPs"/>
    <property type="match status" value="1"/>
</dbReference>
<dbReference type="HAMAP" id="MF_00151">
    <property type="entry name" value="PPAT_bact"/>
    <property type="match status" value="1"/>
</dbReference>
<dbReference type="InterPro" id="IPR004821">
    <property type="entry name" value="Cyt_trans-like"/>
</dbReference>
<dbReference type="InterPro" id="IPR001980">
    <property type="entry name" value="PPAT"/>
</dbReference>
<dbReference type="InterPro" id="IPR014729">
    <property type="entry name" value="Rossmann-like_a/b/a_fold"/>
</dbReference>
<dbReference type="NCBIfam" id="TIGR01510">
    <property type="entry name" value="coaD_prev_kdtB"/>
    <property type="match status" value="1"/>
</dbReference>
<dbReference type="NCBIfam" id="TIGR00125">
    <property type="entry name" value="cyt_tran_rel"/>
    <property type="match status" value="1"/>
</dbReference>
<dbReference type="PANTHER" id="PTHR21342">
    <property type="entry name" value="PHOSPHOPANTETHEINE ADENYLYLTRANSFERASE"/>
    <property type="match status" value="1"/>
</dbReference>
<dbReference type="PANTHER" id="PTHR21342:SF1">
    <property type="entry name" value="PHOSPHOPANTETHEINE ADENYLYLTRANSFERASE"/>
    <property type="match status" value="1"/>
</dbReference>
<dbReference type="Pfam" id="PF01467">
    <property type="entry name" value="CTP_transf_like"/>
    <property type="match status" value="1"/>
</dbReference>
<dbReference type="PRINTS" id="PR01020">
    <property type="entry name" value="LPSBIOSNTHSS"/>
</dbReference>
<dbReference type="SUPFAM" id="SSF52374">
    <property type="entry name" value="Nucleotidylyl transferase"/>
    <property type="match status" value="1"/>
</dbReference>
<accession>O69466</accession>
<sequence length="160" mass="17496">MSSVVCPGSFDPVTLGHIDVFERAAAQFDEVVVAILINPVKKGMFDLDERIAMINESTMHLPNLRVEAGEGLVVALVRSRGMTAIVKGLRTGVDFEYELQMAQMNKHIAGVDTFFVATAPRYSFVSSSLVKEVAMLGGDVSELLPESVNRRFREKMSGTS</sequence>
<evidence type="ECO:0000255" key="1">
    <source>
        <dbReference type="HAMAP-Rule" id="MF_00151"/>
    </source>
</evidence>
<evidence type="ECO:0000305" key="2"/>
<feature type="chain" id="PRO_0000156237" description="Phosphopantetheine adenylyltransferase">
    <location>
        <begin position="1"/>
        <end position="160"/>
    </location>
</feature>
<feature type="binding site" evidence="1">
    <location>
        <begin position="9"/>
        <end position="10"/>
    </location>
    <ligand>
        <name>ATP</name>
        <dbReference type="ChEBI" id="CHEBI:30616"/>
    </ligand>
</feature>
<feature type="binding site" evidence="1">
    <location>
        <position position="9"/>
    </location>
    <ligand>
        <name>substrate</name>
    </ligand>
</feature>
<feature type="binding site" evidence="1">
    <location>
        <position position="17"/>
    </location>
    <ligand>
        <name>ATP</name>
        <dbReference type="ChEBI" id="CHEBI:30616"/>
    </ligand>
</feature>
<feature type="binding site" evidence="1">
    <location>
        <position position="41"/>
    </location>
    <ligand>
        <name>substrate</name>
    </ligand>
</feature>
<feature type="binding site" evidence="1">
    <location>
        <position position="73"/>
    </location>
    <ligand>
        <name>substrate</name>
    </ligand>
</feature>
<feature type="binding site" evidence="1">
    <location>
        <position position="87"/>
    </location>
    <ligand>
        <name>substrate</name>
    </ligand>
</feature>
<feature type="binding site" evidence="1">
    <location>
        <begin position="88"/>
        <end position="90"/>
    </location>
    <ligand>
        <name>ATP</name>
        <dbReference type="ChEBI" id="CHEBI:30616"/>
    </ligand>
</feature>
<feature type="binding site" evidence="1">
    <location>
        <position position="98"/>
    </location>
    <ligand>
        <name>ATP</name>
        <dbReference type="ChEBI" id="CHEBI:30616"/>
    </ligand>
</feature>
<feature type="binding site" evidence="1">
    <location>
        <begin position="122"/>
        <end position="128"/>
    </location>
    <ligand>
        <name>ATP</name>
        <dbReference type="ChEBI" id="CHEBI:30616"/>
    </ligand>
</feature>
<feature type="site" description="Transition state stabilizer" evidence="1">
    <location>
        <position position="17"/>
    </location>
</feature>
<comment type="function">
    <text evidence="1">Reversibly transfers an adenylyl group from ATP to 4'-phosphopantetheine, yielding dephospho-CoA (dPCoA) and pyrophosphate.</text>
</comment>
<comment type="catalytic activity">
    <reaction evidence="1">
        <text>(R)-4'-phosphopantetheine + ATP + H(+) = 3'-dephospho-CoA + diphosphate</text>
        <dbReference type="Rhea" id="RHEA:19801"/>
        <dbReference type="ChEBI" id="CHEBI:15378"/>
        <dbReference type="ChEBI" id="CHEBI:30616"/>
        <dbReference type="ChEBI" id="CHEBI:33019"/>
        <dbReference type="ChEBI" id="CHEBI:57328"/>
        <dbReference type="ChEBI" id="CHEBI:61723"/>
        <dbReference type="EC" id="2.7.7.3"/>
    </reaction>
</comment>
<comment type="cofactor">
    <cofactor evidence="1">
        <name>Mg(2+)</name>
        <dbReference type="ChEBI" id="CHEBI:18420"/>
    </cofactor>
</comment>
<comment type="pathway">
    <text evidence="1">Cofactor biosynthesis; coenzyme A biosynthesis; CoA from (R)-pantothenate: step 4/5.</text>
</comment>
<comment type="subunit">
    <text evidence="1">Homohexamer.</text>
</comment>
<comment type="subcellular location">
    <subcellularLocation>
        <location evidence="1">Cytoplasm</location>
    </subcellularLocation>
</comment>
<comment type="similarity">
    <text evidence="1">Belongs to the bacterial CoaD family.</text>
</comment>
<comment type="sequence caution" evidence="2">
    <conflict type="erroneous initiation">
        <sequence resource="EMBL-CDS" id="CAC30616"/>
    </conflict>
</comment>
<organism>
    <name type="scientific">Mycobacterium leprae (strain TN)</name>
    <dbReference type="NCBI Taxonomy" id="272631"/>
    <lineage>
        <taxon>Bacteria</taxon>
        <taxon>Bacillati</taxon>
        <taxon>Actinomycetota</taxon>
        <taxon>Actinomycetes</taxon>
        <taxon>Mycobacteriales</taxon>
        <taxon>Mycobacteriaceae</taxon>
        <taxon>Mycobacterium</taxon>
    </lineage>
</organism>
<proteinExistence type="inferred from homology"/>
<name>COAD_MYCLE</name>
<reference key="1">
    <citation type="journal article" date="2001" name="Nature">
        <title>Massive gene decay in the leprosy bacillus.</title>
        <authorList>
            <person name="Cole S.T."/>
            <person name="Eiglmeier K."/>
            <person name="Parkhill J."/>
            <person name="James K.D."/>
            <person name="Thomson N.R."/>
            <person name="Wheeler P.R."/>
            <person name="Honore N."/>
            <person name="Garnier T."/>
            <person name="Churcher C.M."/>
            <person name="Harris D.E."/>
            <person name="Mungall K.L."/>
            <person name="Basham D."/>
            <person name="Brown D."/>
            <person name="Chillingworth T."/>
            <person name="Connor R."/>
            <person name="Davies R.M."/>
            <person name="Devlin K."/>
            <person name="Duthoy S."/>
            <person name="Feltwell T."/>
            <person name="Fraser A."/>
            <person name="Hamlin N."/>
            <person name="Holroyd S."/>
            <person name="Hornsby T."/>
            <person name="Jagels K."/>
            <person name="Lacroix C."/>
            <person name="Maclean J."/>
            <person name="Moule S."/>
            <person name="Murphy L.D."/>
            <person name="Oliver K."/>
            <person name="Quail M.A."/>
            <person name="Rajandream M.A."/>
            <person name="Rutherford K.M."/>
            <person name="Rutter S."/>
            <person name="Seeger K."/>
            <person name="Simon S."/>
            <person name="Simmonds M."/>
            <person name="Skelton J."/>
            <person name="Squares R."/>
            <person name="Squares S."/>
            <person name="Stevens K."/>
            <person name="Taylor K."/>
            <person name="Whitehead S."/>
            <person name="Woodward J.R."/>
            <person name="Barrell B.G."/>
        </authorList>
    </citation>
    <scope>NUCLEOTIDE SEQUENCE [LARGE SCALE GENOMIC DNA]</scope>
    <source>
        <strain>TN</strain>
    </source>
</reference>
<keyword id="KW-0067">ATP-binding</keyword>
<keyword id="KW-0173">Coenzyme A biosynthesis</keyword>
<keyword id="KW-0963">Cytoplasm</keyword>
<keyword id="KW-0460">Magnesium</keyword>
<keyword id="KW-0547">Nucleotide-binding</keyword>
<keyword id="KW-0548">Nucleotidyltransferase</keyword>
<keyword id="KW-1185">Reference proteome</keyword>
<keyword id="KW-0808">Transferase</keyword>